<feature type="chain" id="PRO_1000140277" description="Putrescine aminotransferase">
    <location>
        <begin position="1"/>
        <end position="459"/>
    </location>
</feature>
<feature type="binding site" description="in other chain" evidence="1">
    <location>
        <begin position="150"/>
        <end position="151"/>
    </location>
    <ligand>
        <name>pyridoxal 5'-phosphate</name>
        <dbReference type="ChEBI" id="CHEBI:597326"/>
        <note>ligand shared between dimeric partners</note>
    </ligand>
</feature>
<feature type="binding site" description="in other chain" evidence="1">
    <location>
        <position position="274"/>
    </location>
    <ligand>
        <name>pyridoxal 5'-phosphate</name>
        <dbReference type="ChEBI" id="CHEBI:597326"/>
        <note>ligand shared between dimeric partners</note>
    </ligand>
</feature>
<feature type="binding site" evidence="1">
    <location>
        <position position="332"/>
    </location>
    <ligand>
        <name>pyridoxal 5'-phosphate</name>
        <dbReference type="ChEBI" id="CHEBI:597326"/>
        <note>ligand shared between dimeric partners</note>
    </ligand>
</feature>
<feature type="modified residue" description="N6-(pyridoxal phosphate)lysine" evidence="1">
    <location>
        <position position="300"/>
    </location>
</feature>
<accession>B5XTY7</accession>
<proteinExistence type="inferred from homology"/>
<sequence>MNRLPSSASALACSAHALNLIEKRTLDHEEMKALNQEVREYFKEHVNPGFLEYRKSVTAGGDYGAVEWQAGGLNTLVDTQGQEFIDCLGGFGIFNVGHRNPVVVSAVENQLAKQPLHSQELLDPLRAMLAKTLAALTPGKLKYSFFCNSGTESVEAAIKLAKAYQSPRGKFTFIATSGAFHGKSLGALSATAKSTFRKPFMPLLPGFRHVPFGDINAMRTMLSECKKTGDDVAAVILEPIQGEGGVILPPQGYLPAVRKLCDEFGALLILDEVQTGMGRTGKMFACEHENVQPDILCLAKALGGGVMPIGATVATEEVFSVLFDNPFLHTTTFGGNPLACAAALATINVLLTQNLPAQAAQKGDMLLDGFRLLAQEYPDLVNEVRGKGMLMAIEFVDNEIGYDFASEMFRQRVLVAGTLNNAKTIRVEPPLTLTLEQCEQVLKAARKALAALRVSVEEA</sequence>
<reference key="1">
    <citation type="journal article" date="2008" name="PLoS Genet.">
        <title>Complete genome sequence of the N2-fixing broad host range endophyte Klebsiella pneumoniae 342 and virulence predictions verified in mice.</title>
        <authorList>
            <person name="Fouts D.E."/>
            <person name="Tyler H.L."/>
            <person name="DeBoy R.T."/>
            <person name="Daugherty S."/>
            <person name="Ren Q."/>
            <person name="Badger J.H."/>
            <person name="Durkin A.S."/>
            <person name="Huot H."/>
            <person name="Shrivastava S."/>
            <person name="Kothari S."/>
            <person name="Dodson R.J."/>
            <person name="Mohamoud Y."/>
            <person name="Khouri H."/>
            <person name="Roesch L.F.W."/>
            <person name="Krogfelt K.A."/>
            <person name="Struve C."/>
            <person name="Triplett E.W."/>
            <person name="Methe B.A."/>
        </authorList>
    </citation>
    <scope>NUCLEOTIDE SEQUENCE [LARGE SCALE GENOMIC DNA]</scope>
    <source>
        <strain>342</strain>
    </source>
</reference>
<name>PAT_KLEP3</name>
<dbReference type="EC" id="2.6.1.82" evidence="1"/>
<dbReference type="EC" id="2.6.1.29" evidence="1"/>
<dbReference type="EMBL" id="CP000964">
    <property type="protein sequence ID" value="ACI09453.1"/>
    <property type="molecule type" value="Genomic_DNA"/>
</dbReference>
<dbReference type="SMR" id="B5XTY7"/>
<dbReference type="KEGG" id="kpe:KPK_0611"/>
<dbReference type="HOGENOM" id="CLU_016922_10_0_6"/>
<dbReference type="UniPathway" id="UPA00188">
    <property type="reaction ID" value="UER00290"/>
</dbReference>
<dbReference type="Proteomes" id="UP000001734">
    <property type="component" value="Chromosome"/>
</dbReference>
<dbReference type="GO" id="GO:0019161">
    <property type="term" value="F:diamine transaminase activity"/>
    <property type="evidence" value="ECO:0007669"/>
    <property type="project" value="UniProtKB-EC"/>
</dbReference>
<dbReference type="GO" id="GO:0042802">
    <property type="term" value="F:identical protein binding"/>
    <property type="evidence" value="ECO:0007669"/>
    <property type="project" value="TreeGrafter"/>
</dbReference>
<dbReference type="GO" id="GO:0033094">
    <property type="term" value="F:putrescine--2-oxoglutarate transaminase activity"/>
    <property type="evidence" value="ECO:0007669"/>
    <property type="project" value="UniProtKB-UniRule"/>
</dbReference>
<dbReference type="GO" id="GO:0030170">
    <property type="term" value="F:pyridoxal phosphate binding"/>
    <property type="evidence" value="ECO:0007669"/>
    <property type="project" value="UniProtKB-UniRule"/>
</dbReference>
<dbReference type="GO" id="GO:0019477">
    <property type="term" value="P:L-lysine catabolic process"/>
    <property type="evidence" value="ECO:0007669"/>
    <property type="project" value="UniProtKB-UniRule"/>
</dbReference>
<dbReference type="GO" id="GO:0009447">
    <property type="term" value="P:putrescine catabolic process"/>
    <property type="evidence" value="ECO:0007669"/>
    <property type="project" value="UniProtKB-UniRule"/>
</dbReference>
<dbReference type="CDD" id="cd00610">
    <property type="entry name" value="OAT_like"/>
    <property type="match status" value="1"/>
</dbReference>
<dbReference type="FunFam" id="3.40.640.10:FF:000004">
    <property type="entry name" value="Acetylornithine aminotransferase"/>
    <property type="match status" value="1"/>
</dbReference>
<dbReference type="Gene3D" id="3.90.1150.10">
    <property type="entry name" value="Aspartate Aminotransferase, domain 1"/>
    <property type="match status" value="1"/>
</dbReference>
<dbReference type="Gene3D" id="3.40.640.10">
    <property type="entry name" value="Type I PLP-dependent aspartate aminotransferase-like (Major domain)"/>
    <property type="match status" value="1"/>
</dbReference>
<dbReference type="HAMAP" id="MF_01276">
    <property type="entry name" value="Putres_aminotrans_3"/>
    <property type="match status" value="1"/>
</dbReference>
<dbReference type="InterPro" id="IPR005814">
    <property type="entry name" value="Aminotrans_3"/>
</dbReference>
<dbReference type="InterPro" id="IPR049704">
    <property type="entry name" value="Aminotrans_3_PPA_site"/>
</dbReference>
<dbReference type="InterPro" id="IPR050103">
    <property type="entry name" value="Class-III_PLP-dep_AT"/>
</dbReference>
<dbReference type="InterPro" id="IPR017747">
    <property type="entry name" value="Putrescine_aminotransferase"/>
</dbReference>
<dbReference type="InterPro" id="IPR015424">
    <property type="entry name" value="PyrdxlP-dep_Trfase"/>
</dbReference>
<dbReference type="InterPro" id="IPR015421">
    <property type="entry name" value="PyrdxlP-dep_Trfase_major"/>
</dbReference>
<dbReference type="InterPro" id="IPR015422">
    <property type="entry name" value="PyrdxlP-dep_Trfase_small"/>
</dbReference>
<dbReference type="NCBIfam" id="NF008570">
    <property type="entry name" value="PRK11522.1"/>
    <property type="match status" value="1"/>
</dbReference>
<dbReference type="NCBIfam" id="TIGR03372">
    <property type="entry name" value="putres_am_tran"/>
    <property type="match status" value="1"/>
</dbReference>
<dbReference type="PANTHER" id="PTHR11986">
    <property type="entry name" value="AMINOTRANSFERASE CLASS III"/>
    <property type="match status" value="1"/>
</dbReference>
<dbReference type="PANTHER" id="PTHR11986:SF112">
    <property type="entry name" value="PUTRESCINE AMINOTRANSFERASE"/>
    <property type="match status" value="1"/>
</dbReference>
<dbReference type="Pfam" id="PF00202">
    <property type="entry name" value="Aminotran_3"/>
    <property type="match status" value="1"/>
</dbReference>
<dbReference type="PIRSF" id="PIRSF000521">
    <property type="entry name" value="Transaminase_4ab_Lys_Orn"/>
    <property type="match status" value="1"/>
</dbReference>
<dbReference type="SUPFAM" id="SSF53383">
    <property type="entry name" value="PLP-dependent transferases"/>
    <property type="match status" value="1"/>
</dbReference>
<dbReference type="PROSITE" id="PS00600">
    <property type="entry name" value="AA_TRANSFER_CLASS_3"/>
    <property type="match status" value="1"/>
</dbReference>
<organism>
    <name type="scientific">Klebsiella pneumoniae (strain 342)</name>
    <dbReference type="NCBI Taxonomy" id="507522"/>
    <lineage>
        <taxon>Bacteria</taxon>
        <taxon>Pseudomonadati</taxon>
        <taxon>Pseudomonadota</taxon>
        <taxon>Gammaproteobacteria</taxon>
        <taxon>Enterobacterales</taxon>
        <taxon>Enterobacteriaceae</taxon>
        <taxon>Klebsiella/Raoultella group</taxon>
        <taxon>Klebsiella</taxon>
        <taxon>Klebsiella pneumoniae complex</taxon>
    </lineage>
</organism>
<protein>
    <recommendedName>
        <fullName evidence="1">Putrescine aminotransferase</fullName>
        <shortName evidence="1">PAT</shortName>
        <shortName evidence="1">PATase</shortName>
        <ecNumber evidence="1">2.6.1.82</ecNumber>
    </recommendedName>
    <alternativeName>
        <fullName evidence="1">Cadaverine transaminase</fullName>
    </alternativeName>
    <alternativeName>
        <fullName evidence="1">Diamine transaminase</fullName>
        <ecNumber evidence="1">2.6.1.29</ecNumber>
    </alternativeName>
    <alternativeName>
        <fullName evidence="1">Putrescine transaminase</fullName>
    </alternativeName>
    <alternativeName>
        <fullName evidence="1">Putrescine--2-oxoglutaric acid transaminase</fullName>
    </alternativeName>
</protein>
<evidence type="ECO:0000255" key="1">
    <source>
        <dbReference type="HAMAP-Rule" id="MF_01276"/>
    </source>
</evidence>
<keyword id="KW-0032">Aminotransferase</keyword>
<keyword id="KW-0663">Pyridoxal phosphate</keyword>
<keyword id="KW-0808">Transferase</keyword>
<comment type="function">
    <text evidence="1">Catalyzes the aminotransferase reaction from putrescine to 2-oxoglutarate, leading to glutamate and 4-aminobutanal, which spontaneously cyclizes to form 1-pyrroline. This is the first step in one of two pathways for putrescine degradation, where putrescine is converted into 4-aminobutanoate (gamma-aminobutyrate or GABA) via 4-aminobutanal. Also functions as a cadaverine transaminase in a a L-lysine degradation pathway to succinate that proceeds via cadaverine, glutarate and L-2-hydroxyglutarate.</text>
</comment>
<comment type="catalytic activity">
    <reaction evidence="1">
        <text>an alkane-alpha,omega-diamine + 2-oxoglutarate = an omega-aminoaldehyde + L-glutamate</text>
        <dbReference type="Rhea" id="RHEA:18217"/>
        <dbReference type="Rhea" id="RHEA-COMP:9766"/>
        <dbReference type="Rhea" id="RHEA-COMP:12750"/>
        <dbReference type="ChEBI" id="CHEBI:16810"/>
        <dbReference type="ChEBI" id="CHEBI:29985"/>
        <dbReference type="ChEBI" id="CHEBI:70977"/>
        <dbReference type="ChEBI" id="CHEBI:133427"/>
        <dbReference type="EC" id="2.6.1.29"/>
    </reaction>
    <physiologicalReaction direction="left-to-right" evidence="1">
        <dbReference type="Rhea" id="RHEA:18218"/>
    </physiologicalReaction>
</comment>
<comment type="catalytic activity">
    <reaction evidence="1">
        <text>putrescine + 2-oxoglutarate = 1-pyrroline + L-glutamate + H2O</text>
        <dbReference type="Rhea" id="RHEA:12268"/>
        <dbReference type="ChEBI" id="CHEBI:15377"/>
        <dbReference type="ChEBI" id="CHEBI:16810"/>
        <dbReference type="ChEBI" id="CHEBI:29985"/>
        <dbReference type="ChEBI" id="CHEBI:36781"/>
        <dbReference type="ChEBI" id="CHEBI:326268"/>
        <dbReference type="EC" id="2.6.1.82"/>
    </reaction>
    <physiologicalReaction direction="left-to-right" evidence="1">
        <dbReference type="Rhea" id="RHEA:12269"/>
    </physiologicalReaction>
</comment>
<comment type="catalytic activity">
    <reaction evidence="1">
        <text>cadaverine + 2-oxoglutarate = 5-aminopentanal + L-glutamate</text>
        <dbReference type="Rhea" id="RHEA:61624"/>
        <dbReference type="ChEBI" id="CHEBI:16810"/>
        <dbReference type="ChEBI" id="CHEBI:29985"/>
        <dbReference type="ChEBI" id="CHEBI:58384"/>
        <dbReference type="ChEBI" id="CHEBI:144896"/>
    </reaction>
    <physiologicalReaction direction="left-to-right" evidence="1">
        <dbReference type="Rhea" id="RHEA:61625"/>
    </physiologicalReaction>
</comment>
<comment type="cofactor">
    <cofactor evidence="1">
        <name>pyridoxal 5'-phosphate</name>
        <dbReference type="ChEBI" id="CHEBI:597326"/>
    </cofactor>
</comment>
<comment type="pathway">
    <text evidence="1">Amine and polyamine degradation; putrescine degradation; 4-aminobutanal from putrescine (transaminase route): step 1/1.</text>
</comment>
<comment type="similarity">
    <text evidence="1">Belongs to the class-III pyridoxal-phosphate-dependent aminotransferase family. Putrescine aminotransferase subfamily.</text>
</comment>
<gene>
    <name evidence="1" type="primary">patA</name>
    <name type="ordered locus">KPK_0611</name>
</gene>